<protein>
    <recommendedName>
        <fullName evidence="1">Cysteine desulfuration protein SufE</fullName>
    </recommendedName>
</protein>
<gene>
    <name evidence="1" type="primary">sufE</name>
    <name type="ordered locus">ECUMN_1968</name>
</gene>
<proteinExistence type="inferred from homology"/>
<keyword id="KW-0963">Cytoplasm</keyword>
<sequence>MALLPDKEKLLRNFLRCANWEEKYLYIIELGQRLPELRDEDRSSQNSIQGCQSQVWIVMRQNAQGIIKLQGDSDAAIVKGLIAVVFILYDQMTPQDIVNFDVRPWFEKMALTQHLTPSRSQGLEAMIRAIRAKAAALS</sequence>
<dbReference type="EMBL" id="CU928163">
    <property type="protein sequence ID" value="CAR13164.1"/>
    <property type="molecule type" value="Genomic_DNA"/>
</dbReference>
<dbReference type="RefSeq" id="WP_001196534.1">
    <property type="nucleotide sequence ID" value="NC_011751.1"/>
</dbReference>
<dbReference type="RefSeq" id="YP_002412696.1">
    <property type="nucleotide sequence ID" value="NC_011751.1"/>
</dbReference>
<dbReference type="SMR" id="B7N515"/>
<dbReference type="STRING" id="585056.ECUMN_1968"/>
<dbReference type="KEGG" id="eum:ECUMN_1968"/>
<dbReference type="PATRIC" id="fig|585056.7.peg.2154"/>
<dbReference type="HOGENOM" id="CLU_124502_1_1_6"/>
<dbReference type="UniPathway" id="UPA00266"/>
<dbReference type="Proteomes" id="UP000007097">
    <property type="component" value="Chromosome"/>
</dbReference>
<dbReference type="GO" id="GO:0005737">
    <property type="term" value="C:cytoplasm"/>
    <property type="evidence" value="ECO:0007669"/>
    <property type="project" value="UniProtKB-SubCell"/>
</dbReference>
<dbReference type="GO" id="GO:0016226">
    <property type="term" value="P:iron-sulfur cluster assembly"/>
    <property type="evidence" value="ECO:0007669"/>
    <property type="project" value="InterPro"/>
</dbReference>
<dbReference type="GO" id="GO:0006790">
    <property type="term" value="P:sulfur compound metabolic process"/>
    <property type="evidence" value="ECO:0007669"/>
    <property type="project" value="InterPro"/>
</dbReference>
<dbReference type="FunFam" id="3.90.1010.10:FF:000004">
    <property type="entry name" value="Cysteine desulfuration protein SufE"/>
    <property type="match status" value="1"/>
</dbReference>
<dbReference type="Gene3D" id="3.90.1010.10">
    <property type="match status" value="1"/>
</dbReference>
<dbReference type="HAMAP" id="MF_01832">
    <property type="entry name" value="SufE"/>
    <property type="match status" value="1"/>
</dbReference>
<dbReference type="InterPro" id="IPR023939">
    <property type="entry name" value="Cysteine_desulfuration_SufE"/>
</dbReference>
<dbReference type="InterPro" id="IPR003808">
    <property type="entry name" value="Fe-S_metab-assoc_dom"/>
</dbReference>
<dbReference type="NCBIfam" id="NF006792">
    <property type="entry name" value="PRK09296.1"/>
    <property type="match status" value="1"/>
</dbReference>
<dbReference type="PANTHER" id="PTHR43597:SF3">
    <property type="entry name" value="CYSTEINE DESULFURATION PROTEIN SUFE"/>
    <property type="match status" value="1"/>
</dbReference>
<dbReference type="PANTHER" id="PTHR43597">
    <property type="entry name" value="SULFUR ACCEPTOR PROTEIN CSDE"/>
    <property type="match status" value="1"/>
</dbReference>
<dbReference type="Pfam" id="PF02657">
    <property type="entry name" value="SufE"/>
    <property type="match status" value="1"/>
</dbReference>
<dbReference type="SUPFAM" id="SSF82649">
    <property type="entry name" value="SufE/NifU"/>
    <property type="match status" value="1"/>
</dbReference>
<evidence type="ECO:0000255" key="1">
    <source>
        <dbReference type="HAMAP-Rule" id="MF_01832"/>
    </source>
</evidence>
<feature type="chain" id="PRO_1000188325" description="Cysteine desulfuration protein SufE">
    <location>
        <begin position="1"/>
        <end position="138"/>
    </location>
</feature>
<feature type="active site" description="Cysteine persulfide intermediate" evidence="1">
    <location>
        <position position="51"/>
    </location>
</feature>
<organism>
    <name type="scientific">Escherichia coli O17:K52:H18 (strain UMN026 / ExPEC)</name>
    <dbReference type="NCBI Taxonomy" id="585056"/>
    <lineage>
        <taxon>Bacteria</taxon>
        <taxon>Pseudomonadati</taxon>
        <taxon>Pseudomonadota</taxon>
        <taxon>Gammaproteobacteria</taxon>
        <taxon>Enterobacterales</taxon>
        <taxon>Enterobacteriaceae</taxon>
        <taxon>Escherichia</taxon>
    </lineage>
</organism>
<comment type="function">
    <text evidence="1">Participates in cysteine desulfuration mediated by SufS. Cysteine desulfuration mobilizes sulfur from L-cysteine to yield L-alanine and constitutes an essential step in sulfur metabolism for biosynthesis of a variety of sulfur-containing biomolecules. Functions as a sulfur acceptor for SufS, by mediating the direct transfer of the sulfur atom from the S-sulfanylcysteine of SufS, an intermediate product of cysteine desulfuration process.</text>
</comment>
<comment type="pathway">
    <text evidence="1">Cofactor biosynthesis; iron-sulfur cluster biosynthesis.</text>
</comment>
<comment type="subunit">
    <text evidence="1">Homodimer. Interacts with SufS.</text>
</comment>
<comment type="subcellular location">
    <subcellularLocation>
        <location evidence="1">Cytoplasm</location>
    </subcellularLocation>
</comment>
<comment type="similarity">
    <text evidence="1">Belongs to the SufE family.</text>
</comment>
<accession>B7N515</accession>
<name>SUFE_ECOLU</name>
<reference key="1">
    <citation type="journal article" date="2009" name="PLoS Genet.">
        <title>Organised genome dynamics in the Escherichia coli species results in highly diverse adaptive paths.</title>
        <authorList>
            <person name="Touchon M."/>
            <person name="Hoede C."/>
            <person name="Tenaillon O."/>
            <person name="Barbe V."/>
            <person name="Baeriswyl S."/>
            <person name="Bidet P."/>
            <person name="Bingen E."/>
            <person name="Bonacorsi S."/>
            <person name="Bouchier C."/>
            <person name="Bouvet O."/>
            <person name="Calteau A."/>
            <person name="Chiapello H."/>
            <person name="Clermont O."/>
            <person name="Cruveiller S."/>
            <person name="Danchin A."/>
            <person name="Diard M."/>
            <person name="Dossat C."/>
            <person name="Karoui M.E."/>
            <person name="Frapy E."/>
            <person name="Garry L."/>
            <person name="Ghigo J.M."/>
            <person name="Gilles A.M."/>
            <person name="Johnson J."/>
            <person name="Le Bouguenec C."/>
            <person name="Lescat M."/>
            <person name="Mangenot S."/>
            <person name="Martinez-Jehanne V."/>
            <person name="Matic I."/>
            <person name="Nassif X."/>
            <person name="Oztas S."/>
            <person name="Petit M.A."/>
            <person name="Pichon C."/>
            <person name="Rouy Z."/>
            <person name="Ruf C.S."/>
            <person name="Schneider D."/>
            <person name="Tourret J."/>
            <person name="Vacherie B."/>
            <person name="Vallenet D."/>
            <person name="Medigue C."/>
            <person name="Rocha E.P.C."/>
            <person name="Denamur E."/>
        </authorList>
    </citation>
    <scope>NUCLEOTIDE SEQUENCE [LARGE SCALE GENOMIC DNA]</scope>
    <source>
        <strain>UMN026 / ExPEC</strain>
    </source>
</reference>